<sequence length="479" mass="54415">MENITAQLKRGISRQFSTGSIRRTLSRQFTRQSSLDPRRTNMRFSFGRQSSLDPIRRSPDSSKSDDEPHMSVPENLDSTMQLLFMASKGDVRGIEELLDEGIDVNSIDLDGRTALHIAACEGHLGVVKALLSRRANIDARDRWGSTAAADAKYYGNLDVYNLLKARGAKVPKTRKTPMTVSNPREVPEYELNPLEVQVRKSDGISKGAYQVAKWNGTRVSVKILDKDSYSDPERINAFRHELTLLEKVRHPNVIQFVGAVTQNIPMMIVVEYNPKGDLSVYLQKKGRLSPSKALRFALDIARGMNYLHECKPDPIIHCDLKPKNILLDRGGQLKISGFGMIRLSKISQDKAKVANHKAHIDLSNYYIAPEVYKDEIFDLRVDAHSFGVILYEITEGVPVFHPRPPEEVARMMCLEGKRPVFKTKSRSYPPDIKELIEKCWHPEAGIRPTFSEIIIRLDKIVANCSKQGWWKDTFKFPWK</sequence>
<dbReference type="EC" id="2.7.11.1" evidence="4"/>
<dbReference type="EMBL" id="AC002333">
    <property type="protein sequence ID" value="AAF18591.1"/>
    <property type="status" value="ALT_SEQ"/>
    <property type="molecule type" value="Genomic_DNA"/>
</dbReference>
<dbReference type="EMBL" id="CP002685">
    <property type="protein sequence ID" value="AEC10334.1"/>
    <property type="molecule type" value="Genomic_DNA"/>
</dbReference>
<dbReference type="EMBL" id="CP002685">
    <property type="protein sequence ID" value="AEC10335.1"/>
    <property type="molecule type" value="Genomic_DNA"/>
</dbReference>
<dbReference type="EMBL" id="AF461113">
    <property type="protein sequence ID" value="AAN03744.1"/>
    <property type="molecule type" value="mRNA"/>
</dbReference>
<dbReference type="PIR" id="C84871">
    <property type="entry name" value="C84871"/>
</dbReference>
<dbReference type="RefSeq" id="NP_181913.3">
    <molecule id="F4IS56-1"/>
    <property type="nucleotide sequence ID" value="NM_129947.4"/>
</dbReference>
<dbReference type="RefSeq" id="NP_973683.1">
    <molecule id="F4IS56-2"/>
    <property type="nucleotide sequence ID" value="NM_201954.1"/>
</dbReference>
<dbReference type="SMR" id="F4IS56"/>
<dbReference type="FunCoup" id="F4IS56">
    <property type="interactions" value="258"/>
</dbReference>
<dbReference type="IntAct" id="F4IS56">
    <property type="interactions" value="5"/>
</dbReference>
<dbReference type="STRING" id="3702.F4IS56"/>
<dbReference type="iPTMnet" id="F4IS56"/>
<dbReference type="PaxDb" id="3702-AT2G43850.1"/>
<dbReference type="EnsemblPlants" id="AT2G43850.1">
    <molecule id="F4IS56-1"/>
    <property type="protein sequence ID" value="AT2G43850.1"/>
    <property type="gene ID" value="AT2G43850"/>
</dbReference>
<dbReference type="EnsemblPlants" id="AT2G43850.2">
    <molecule id="F4IS56-2"/>
    <property type="protein sequence ID" value="AT2G43850.2"/>
    <property type="gene ID" value="AT2G43850"/>
</dbReference>
<dbReference type="GeneID" id="818989"/>
<dbReference type="Gramene" id="AT2G43850.1">
    <molecule id="F4IS56-1"/>
    <property type="protein sequence ID" value="AT2G43850.1"/>
    <property type="gene ID" value="AT2G43850"/>
</dbReference>
<dbReference type="Gramene" id="AT2G43850.2">
    <molecule id="F4IS56-2"/>
    <property type="protein sequence ID" value="AT2G43850.2"/>
    <property type="gene ID" value="AT2G43850"/>
</dbReference>
<dbReference type="KEGG" id="ath:AT2G43850"/>
<dbReference type="Araport" id="AT2G43850"/>
<dbReference type="TAIR" id="AT2G43850">
    <property type="gene designation" value="ILK1"/>
</dbReference>
<dbReference type="eggNOG" id="KOG0192">
    <property type="taxonomic scope" value="Eukaryota"/>
</dbReference>
<dbReference type="HOGENOM" id="CLU_000288_7_35_1"/>
<dbReference type="InParanoid" id="F4IS56"/>
<dbReference type="PRO" id="PR:F4IS56"/>
<dbReference type="Proteomes" id="UP000006548">
    <property type="component" value="Chromosome 2"/>
</dbReference>
<dbReference type="ExpressionAtlas" id="F4IS56">
    <property type="expression patterns" value="baseline and differential"/>
</dbReference>
<dbReference type="GO" id="GO:0009898">
    <property type="term" value="C:cytoplasmic side of plasma membrane"/>
    <property type="evidence" value="ECO:0000314"/>
    <property type="project" value="TAIR"/>
</dbReference>
<dbReference type="GO" id="GO:0005783">
    <property type="term" value="C:endoplasmic reticulum"/>
    <property type="evidence" value="ECO:0000314"/>
    <property type="project" value="TAIR"/>
</dbReference>
<dbReference type="GO" id="GO:0005789">
    <property type="term" value="C:endoplasmic reticulum membrane"/>
    <property type="evidence" value="ECO:0007669"/>
    <property type="project" value="UniProtKB-SubCell"/>
</dbReference>
<dbReference type="GO" id="GO:0005524">
    <property type="term" value="F:ATP binding"/>
    <property type="evidence" value="ECO:0007669"/>
    <property type="project" value="UniProtKB-KW"/>
</dbReference>
<dbReference type="GO" id="GO:0004672">
    <property type="term" value="F:protein kinase activity"/>
    <property type="evidence" value="ECO:0000315"/>
    <property type="project" value="TAIR"/>
</dbReference>
<dbReference type="GO" id="GO:0106310">
    <property type="term" value="F:protein serine kinase activity"/>
    <property type="evidence" value="ECO:0007669"/>
    <property type="project" value="RHEA"/>
</dbReference>
<dbReference type="GO" id="GO:0004674">
    <property type="term" value="F:protein serine/threonine kinase activity"/>
    <property type="evidence" value="ECO:0007005"/>
    <property type="project" value="TAIR"/>
</dbReference>
<dbReference type="GO" id="GO:0004712">
    <property type="term" value="F:protein serine/threonine/tyrosine kinase activity"/>
    <property type="evidence" value="ECO:0000250"/>
    <property type="project" value="TAIR"/>
</dbReference>
<dbReference type="GO" id="GO:0045087">
    <property type="term" value="P:innate immune response"/>
    <property type="evidence" value="ECO:0000314"/>
    <property type="project" value="TAIR"/>
</dbReference>
<dbReference type="GO" id="GO:0046777">
    <property type="term" value="P:protein autophosphorylation"/>
    <property type="evidence" value="ECO:0007005"/>
    <property type="project" value="TAIR"/>
</dbReference>
<dbReference type="GO" id="GO:0006970">
    <property type="term" value="P:response to osmotic stress"/>
    <property type="evidence" value="ECO:0000315"/>
    <property type="project" value="TAIR"/>
</dbReference>
<dbReference type="FunFam" id="1.25.40.20:FF:000211">
    <property type="entry name" value="Integrin-linked protein kinase 1"/>
    <property type="match status" value="1"/>
</dbReference>
<dbReference type="FunFam" id="1.10.510.10:FF:000355">
    <property type="entry name" value="Integrin-linked protein kinase family"/>
    <property type="match status" value="1"/>
</dbReference>
<dbReference type="FunFam" id="3.30.200.20:FF:000180">
    <property type="entry name" value="serine/threonine-protein kinase STY46-like"/>
    <property type="match status" value="1"/>
</dbReference>
<dbReference type="Gene3D" id="1.25.40.20">
    <property type="entry name" value="Ankyrin repeat-containing domain"/>
    <property type="match status" value="1"/>
</dbReference>
<dbReference type="Gene3D" id="3.30.200.20">
    <property type="entry name" value="Phosphorylase Kinase, domain 1"/>
    <property type="match status" value="1"/>
</dbReference>
<dbReference type="Gene3D" id="1.10.510.10">
    <property type="entry name" value="Transferase(Phosphotransferase) domain 1"/>
    <property type="match status" value="1"/>
</dbReference>
<dbReference type="InterPro" id="IPR002110">
    <property type="entry name" value="Ankyrin_rpt"/>
</dbReference>
<dbReference type="InterPro" id="IPR036770">
    <property type="entry name" value="Ankyrin_rpt-contain_sf"/>
</dbReference>
<dbReference type="InterPro" id="IPR011009">
    <property type="entry name" value="Kinase-like_dom_sf"/>
</dbReference>
<dbReference type="InterPro" id="IPR000719">
    <property type="entry name" value="Prot_kinase_dom"/>
</dbReference>
<dbReference type="InterPro" id="IPR001245">
    <property type="entry name" value="Ser-Thr/Tyr_kinase_cat_dom"/>
</dbReference>
<dbReference type="InterPro" id="IPR008271">
    <property type="entry name" value="Ser/Thr_kinase_AS"/>
</dbReference>
<dbReference type="InterPro" id="IPR051681">
    <property type="entry name" value="Ser/Thr_Kinases-Pseudokinases"/>
</dbReference>
<dbReference type="PANTHER" id="PTHR44329:SF91">
    <property type="entry name" value="INTEGRIN-LINKED PROTEIN KINASE 1-RELATED"/>
    <property type="match status" value="1"/>
</dbReference>
<dbReference type="PANTHER" id="PTHR44329">
    <property type="entry name" value="SERINE/THREONINE-PROTEIN KINASE TNNI3K-RELATED"/>
    <property type="match status" value="1"/>
</dbReference>
<dbReference type="Pfam" id="PF12796">
    <property type="entry name" value="Ank_2"/>
    <property type="match status" value="1"/>
</dbReference>
<dbReference type="Pfam" id="PF07714">
    <property type="entry name" value="PK_Tyr_Ser-Thr"/>
    <property type="match status" value="1"/>
</dbReference>
<dbReference type="PIRSF" id="PIRSF000654">
    <property type="entry name" value="Integrin-linked_kinase"/>
    <property type="match status" value="1"/>
</dbReference>
<dbReference type="SMART" id="SM00248">
    <property type="entry name" value="ANK"/>
    <property type="match status" value="3"/>
</dbReference>
<dbReference type="SMART" id="SM00220">
    <property type="entry name" value="S_TKc"/>
    <property type="match status" value="1"/>
</dbReference>
<dbReference type="SUPFAM" id="SSF48403">
    <property type="entry name" value="Ankyrin repeat"/>
    <property type="match status" value="1"/>
</dbReference>
<dbReference type="SUPFAM" id="SSF56112">
    <property type="entry name" value="Protein kinase-like (PK-like)"/>
    <property type="match status" value="1"/>
</dbReference>
<dbReference type="PROSITE" id="PS50297">
    <property type="entry name" value="ANK_REP_REGION"/>
    <property type="match status" value="1"/>
</dbReference>
<dbReference type="PROSITE" id="PS50088">
    <property type="entry name" value="ANK_REPEAT"/>
    <property type="match status" value="1"/>
</dbReference>
<dbReference type="PROSITE" id="PS50011">
    <property type="entry name" value="PROTEIN_KINASE_DOM"/>
    <property type="match status" value="1"/>
</dbReference>
<dbReference type="PROSITE" id="PS00108">
    <property type="entry name" value="PROTEIN_KINASE_ST"/>
    <property type="match status" value="1"/>
</dbReference>
<accession>F4IS56</accession>
<accession>F4IS57</accession>
<accession>Q8LL75</accession>
<accession>Q9SDB3</accession>
<organism>
    <name type="scientific">Arabidopsis thaliana</name>
    <name type="common">Mouse-ear cress</name>
    <dbReference type="NCBI Taxonomy" id="3702"/>
    <lineage>
        <taxon>Eukaryota</taxon>
        <taxon>Viridiplantae</taxon>
        <taxon>Streptophyta</taxon>
        <taxon>Embryophyta</taxon>
        <taxon>Tracheophyta</taxon>
        <taxon>Spermatophyta</taxon>
        <taxon>Magnoliopsida</taxon>
        <taxon>eudicotyledons</taxon>
        <taxon>Gunneridae</taxon>
        <taxon>Pentapetalae</taxon>
        <taxon>rosids</taxon>
        <taxon>malvids</taxon>
        <taxon>Brassicales</taxon>
        <taxon>Brassicaceae</taxon>
        <taxon>Camelineae</taxon>
        <taxon>Arabidopsis</taxon>
    </lineage>
</organism>
<name>ILK1_ARATH</name>
<protein>
    <recommendedName>
        <fullName evidence="6">Integrin-linked protein kinase 1</fullName>
        <ecNumber evidence="4">2.7.11.1</ecNumber>
    </recommendedName>
    <alternativeName>
        <fullName evidence="5">Ankyrin protein kinase 1</fullName>
    </alternativeName>
</protein>
<comment type="function">
    <text evidence="4">Functions as a link between plant defense pathways, stress responses and potassium homeostasis. Promotes osmotic stress sensitivity, responses to the bacterial-derived pathogen-associated molecular pattern (PAMP) flg22, and resistance to bacterial pathogens. Promotes the accumulation of POT5/HAK5, a potassium transporter that mediates high-affinity uptake during potassium deficiency.</text>
</comment>
<comment type="catalytic activity">
    <reaction evidence="4">
        <text>L-seryl-[protein] + ATP = O-phospho-L-seryl-[protein] + ADP + H(+)</text>
        <dbReference type="Rhea" id="RHEA:17989"/>
        <dbReference type="Rhea" id="RHEA-COMP:9863"/>
        <dbReference type="Rhea" id="RHEA-COMP:11604"/>
        <dbReference type="ChEBI" id="CHEBI:15378"/>
        <dbReference type="ChEBI" id="CHEBI:29999"/>
        <dbReference type="ChEBI" id="CHEBI:30616"/>
        <dbReference type="ChEBI" id="CHEBI:83421"/>
        <dbReference type="ChEBI" id="CHEBI:456216"/>
        <dbReference type="EC" id="2.7.11.1"/>
    </reaction>
</comment>
<comment type="catalytic activity">
    <reaction evidence="4">
        <text>L-threonyl-[protein] + ATP = O-phospho-L-threonyl-[protein] + ADP + H(+)</text>
        <dbReference type="Rhea" id="RHEA:46608"/>
        <dbReference type="Rhea" id="RHEA-COMP:11060"/>
        <dbReference type="Rhea" id="RHEA-COMP:11605"/>
        <dbReference type="ChEBI" id="CHEBI:15378"/>
        <dbReference type="ChEBI" id="CHEBI:30013"/>
        <dbReference type="ChEBI" id="CHEBI:30616"/>
        <dbReference type="ChEBI" id="CHEBI:61977"/>
        <dbReference type="ChEBI" id="CHEBI:456216"/>
        <dbReference type="EC" id="2.7.11.1"/>
    </reaction>
</comment>
<comment type="activity regulation">
    <text evidence="4">Kinase activity is suppressed by interaction with CML9.</text>
</comment>
<comment type="subunit">
    <text evidence="4">Interacts with CML9 and POT5/HAK5.</text>
</comment>
<comment type="subcellular location">
    <subcellularLocation>
        <location evidence="4">Cell membrane</location>
        <topology evidence="4">Peripheral membrane protein</topology>
    </subcellularLocation>
    <subcellularLocation>
        <location evidence="4">Endoplasmic reticulum membrane</location>
        <topology evidence="4">Peripheral membrane protein</topology>
    </subcellularLocation>
</comment>
<comment type="alternative products">
    <event type="alternative splicing"/>
    <isoform>
        <id>F4IS56-1</id>
        <name>1</name>
        <sequence type="displayed"/>
    </isoform>
    <isoform>
        <id>F4IS56-2</id>
        <name>2</name>
        <sequence type="described" ref="VSP_059111"/>
    </isoform>
</comment>
<comment type="induction">
    <text evidence="4">Induced by mannitol and the pathogen-associated molecular pattern (PAMP) flg22.</text>
</comment>
<comment type="PTM">
    <text evidence="4">Autophosphorylated at Ser-17 and Ser-26.</text>
</comment>
<comment type="similarity">
    <text evidence="2">Belongs to the protein kinase superfamily. Ser/Thr protein kinase family.</text>
</comment>
<comment type="sequence caution" evidence="7">
    <conflict type="erroneous gene model prediction">
        <sequence resource="EMBL-CDS" id="AAF18591"/>
    </conflict>
</comment>
<keyword id="KW-0025">Alternative splicing</keyword>
<keyword id="KW-0040">ANK repeat</keyword>
<keyword id="KW-0067">ATP-binding</keyword>
<keyword id="KW-1003">Cell membrane</keyword>
<keyword id="KW-0256">Endoplasmic reticulum</keyword>
<keyword id="KW-0418">Kinase</keyword>
<keyword id="KW-0472">Membrane</keyword>
<keyword id="KW-0547">Nucleotide-binding</keyword>
<keyword id="KW-0597">Phosphoprotein</keyword>
<keyword id="KW-0611">Plant defense</keyword>
<keyword id="KW-1185">Reference proteome</keyword>
<keyword id="KW-0677">Repeat</keyword>
<keyword id="KW-0723">Serine/threonine-protein kinase</keyword>
<keyword id="KW-0346">Stress response</keyword>
<keyword id="KW-0808">Transferase</keyword>
<reference key="1">
    <citation type="journal article" date="1999" name="Nature">
        <title>Sequence and analysis of chromosome 2 of the plant Arabidopsis thaliana.</title>
        <authorList>
            <person name="Lin X."/>
            <person name="Kaul S."/>
            <person name="Rounsley S.D."/>
            <person name="Shea T.P."/>
            <person name="Benito M.-I."/>
            <person name="Town C.D."/>
            <person name="Fujii C.Y."/>
            <person name="Mason T.M."/>
            <person name="Bowman C.L."/>
            <person name="Barnstead M.E."/>
            <person name="Feldblyum T.V."/>
            <person name="Buell C.R."/>
            <person name="Ketchum K.A."/>
            <person name="Lee J.J."/>
            <person name="Ronning C.M."/>
            <person name="Koo H.L."/>
            <person name="Moffat K.S."/>
            <person name="Cronin L.A."/>
            <person name="Shen M."/>
            <person name="Pai G."/>
            <person name="Van Aken S."/>
            <person name="Umayam L."/>
            <person name="Tallon L.J."/>
            <person name="Gill J.E."/>
            <person name="Adams M.D."/>
            <person name="Carrera A.J."/>
            <person name="Creasy T.H."/>
            <person name="Goodman H.M."/>
            <person name="Somerville C.R."/>
            <person name="Copenhaver G.P."/>
            <person name="Preuss D."/>
            <person name="Nierman W.C."/>
            <person name="White O."/>
            <person name="Eisen J.A."/>
            <person name="Salzberg S.L."/>
            <person name="Fraser C.M."/>
            <person name="Venter J.C."/>
        </authorList>
    </citation>
    <scope>NUCLEOTIDE SEQUENCE [LARGE SCALE GENOMIC DNA]</scope>
    <source>
        <strain>cv. Columbia</strain>
    </source>
</reference>
<reference key="2">
    <citation type="journal article" date="2017" name="Plant J.">
        <title>Araport11: a complete reannotation of the Arabidopsis thaliana reference genome.</title>
        <authorList>
            <person name="Cheng C.Y."/>
            <person name="Krishnakumar V."/>
            <person name="Chan A.P."/>
            <person name="Thibaud-Nissen F."/>
            <person name="Schobel S."/>
            <person name="Town C.D."/>
        </authorList>
    </citation>
    <scope>GENOME REANNOTATION</scope>
    <source>
        <strain>cv. Columbia</strain>
    </source>
</reference>
<reference key="3">
    <citation type="journal article" date="2003" name="Plant Mol. Biol.">
        <title>Ankyrin protein kinases: a novel type of plant kinase gene whose expression is induced by osmotic stress in alfalfa.</title>
        <authorList>
            <person name="Chinchilla D."/>
            <person name="Merchan F."/>
            <person name="Megias M."/>
            <person name="Kondorosi A."/>
            <person name="Sousa C."/>
            <person name="Crespi M."/>
        </authorList>
    </citation>
    <scope>NUCLEOTIDE SEQUENCE [MRNA] OF 218-479</scope>
    <source>
        <strain>cv. Columbia</strain>
    </source>
</reference>
<reference key="4">
    <citation type="journal article" date="2016" name="Plant Physiol.">
        <title>The Raf-like kinase ILK1 and the high affinity K+ transporter HAK5 are required for innate immunity and abiotic stress response.</title>
        <authorList>
            <person name="Brauer E.K."/>
            <person name="Ahsan N."/>
            <person name="Dale R."/>
            <person name="Kato N."/>
            <person name="Coluccio A.E."/>
            <person name="Pineros M.A."/>
            <person name="Kochian L.V."/>
            <person name="Thelen J.J."/>
            <person name="Popescu S.C."/>
        </authorList>
    </citation>
    <scope>FUNCTION</scope>
    <scope>CATALYTIC ACTIVITY</scope>
    <scope>ACTIVITY REGULATION</scope>
    <scope>INTERACTION WITH CML9 AND POT5/HAK5</scope>
    <scope>SUBCELLULAR LOCATION</scope>
    <scope>INDUCTION</scope>
    <scope>PHOSPHORYLATION AT SER-17 AND SER-26</scope>
    <scope>MUTAGENESIS OF LYS-222 AND ASP-319</scope>
</reference>
<gene>
    <name evidence="6" type="primary">ILK1</name>
    <name evidence="5" type="synonym">APK1</name>
    <name evidence="8" type="ordered locus">At2g43850</name>
    <name evidence="9" type="ORF">F18O19.4</name>
</gene>
<evidence type="ECO:0000255" key="1"/>
<evidence type="ECO:0000255" key="2">
    <source>
        <dbReference type="PROSITE-ProRule" id="PRU00159"/>
    </source>
</evidence>
<evidence type="ECO:0000256" key="3">
    <source>
        <dbReference type="SAM" id="MobiDB-lite"/>
    </source>
</evidence>
<evidence type="ECO:0000269" key="4">
    <source>
    </source>
</evidence>
<evidence type="ECO:0000303" key="5">
    <source>
    </source>
</evidence>
<evidence type="ECO:0000303" key="6">
    <source>
    </source>
</evidence>
<evidence type="ECO:0000305" key="7"/>
<evidence type="ECO:0000312" key="8">
    <source>
        <dbReference type="Araport" id="AT2G43850"/>
    </source>
</evidence>
<evidence type="ECO:0000312" key="9">
    <source>
        <dbReference type="EMBL" id="AEC10334.1"/>
    </source>
</evidence>
<proteinExistence type="evidence at protein level"/>
<feature type="chain" id="PRO_0000441780" description="Integrin-linked protein kinase 1">
    <location>
        <begin position="1"/>
        <end position="479"/>
    </location>
</feature>
<feature type="repeat" description="ANK 1" evidence="1">
    <location>
        <begin position="77"/>
        <end position="106"/>
    </location>
</feature>
<feature type="repeat" description="ANK 2" evidence="1">
    <location>
        <begin position="110"/>
        <end position="139"/>
    </location>
</feature>
<feature type="domain" description="Protein kinase" evidence="2">
    <location>
        <begin position="194"/>
        <end position="461"/>
    </location>
</feature>
<feature type="region of interest" description="Disordered" evidence="3">
    <location>
        <begin position="29"/>
        <end position="73"/>
    </location>
</feature>
<feature type="compositionally biased region" description="Basic and acidic residues" evidence="3">
    <location>
        <begin position="54"/>
        <end position="69"/>
    </location>
</feature>
<feature type="active site" description="Proton acceptor" evidence="2">
    <location>
        <position position="319"/>
    </location>
</feature>
<feature type="binding site" evidence="2">
    <location>
        <begin position="200"/>
        <end position="208"/>
    </location>
    <ligand>
        <name>ATP</name>
        <dbReference type="ChEBI" id="CHEBI:30616"/>
    </ligand>
</feature>
<feature type="binding site" evidence="2">
    <location>
        <position position="222"/>
    </location>
    <ligand>
        <name>ATP</name>
        <dbReference type="ChEBI" id="CHEBI:30616"/>
    </ligand>
</feature>
<feature type="modified residue" description="Phosphoserine" evidence="4">
    <location>
        <position position="17"/>
    </location>
</feature>
<feature type="modified residue" description="Phosphoserine" evidence="4">
    <location>
        <position position="26"/>
    </location>
</feature>
<feature type="splice variant" id="VSP_059111" description="In isoform 2.">
    <original>GA</original>
    <variation>AS</variation>
    <location>
        <begin position="207"/>
        <end position="208"/>
    </location>
</feature>
<feature type="mutagenesis site" description="Decreases kinase activity." evidence="4">
    <original>K</original>
    <variation>A</variation>
    <location>
        <position position="222"/>
    </location>
</feature>
<feature type="mutagenesis site" description="Increases kinase activity." evidence="4">
    <original>D</original>
    <variation>N</variation>
    <location>
        <position position="319"/>
    </location>
</feature>
<feature type="sequence conflict" description="In Ref. 3; AAN03744." evidence="7" ref="3">
    <original>L</original>
    <variation>F</variation>
    <location>
        <position position="307"/>
    </location>
</feature>